<name>IF1_NITEC</name>
<organism>
    <name type="scientific">Nitrosomonas eutropha (strain DSM 101675 / C91 / Nm57)</name>
    <dbReference type="NCBI Taxonomy" id="335283"/>
    <lineage>
        <taxon>Bacteria</taxon>
        <taxon>Pseudomonadati</taxon>
        <taxon>Pseudomonadota</taxon>
        <taxon>Betaproteobacteria</taxon>
        <taxon>Nitrosomonadales</taxon>
        <taxon>Nitrosomonadaceae</taxon>
        <taxon>Nitrosomonas</taxon>
    </lineage>
</organism>
<dbReference type="EMBL" id="CP000450">
    <property type="protein sequence ID" value="ABI58851.1"/>
    <property type="molecule type" value="Genomic_DNA"/>
</dbReference>
<dbReference type="RefSeq" id="WP_011111057.1">
    <property type="nucleotide sequence ID" value="NC_008344.1"/>
</dbReference>
<dbReference type="SMR" id="Q0AIH5"/>
<dbReference type="STRING" id="335283.Neut_0579"/>
<dbReference type="GeneID" id="87103629"/>
<dbReference type="KEGG" id="net:Neut_0579"/>
<dbReference type="eggNOG" id="COG0361">
    <property type="taxonomic scope" value="Bacteria"/>
</dbReference>
<dbReference type="HOGENOM" id="CLU_151267_1_0_4"/>
<dbReference type="OrthoDB" id="9803250at2"/>
<dbReference type="Proteomes" id="UP000001966">
    <property type="component" value="Chromosome"/>
</dbReference>
<dbReference type="GO" id="GO:0005829">
    <property type="term" value="C:cytosol"/>
    <property type="evidence" value="ECO:0007669"/>
    <property type="project" value="TreeGrafter"/>
</dbReference>
<dbReference type="GO" id="GO:0043022">
    <property type="term" value="F:ribosome binding"/>
    <property type="evidence" value="ECO:0007669"/>
    <property type="project" value="UniProtKB-UniRule"/>
</dbReference>
<dbReference type="GO" id="GO:0019843">
    <property type="term" value="F:rRNA binding"/>
    <property type="evidence" value="ECO:0007669"/>
    <property type="project" value="UniProtKB-UniRule"/>
</dbReference>
<dbReference type="GO" id="GO:0003743">
    <property type="term" value="F:translation initiation factor activity"/>
    <property type="evidence" value="ECO:0007669"/>
    <property type="project" value="UniProtKB-UniRule"/>
</dbReference>
<dbReference type="CDD" id="cd04451">
    <property type="entry name" value="S1_IF1"/>
    <property type="match status" value="1"/>
</dbReference>
<dbReference type="FunFam" id="2.40.50.140:FF:000002">
    <property type="entry name" value="Translation initiation factor IF-1"/>
    <property type="match status" value="1"/>
</dbReference>
<dbReference type="Gene3D" id="2.40.50.140">
    <property type="entry name" value="Nucleic acid-binding proteins"/>
    <property type="match status" value="1"/>
</dbReference>
<dbReference type="HAMAP" id="MF_00075">
    <property type="entry name" value="IF_1"/>
    <property type="match status" value="1"/>
</dbReference>
<dbReference type="InterPro" id="IPR012340">
    <property type="entry name" value="NA-bd_OB-fold"/>
</dbReference>
<dbReference type="InterPro" id="IPR006196">
    <property type="entry name" value="RNA-binding_domain_S1_IF1"/>
</dbReference>
<dbReference type="InterPro" id="IPR003029">
    <property type="entry name" value="S1_domain"/>
</dbReference>
<dbReference type="InterPro" id="IPR004368">
    <property type="entry name" value="TIF_IF1"/>
</dbReference>
<dbReference type="NCBIfam" id="TIGR00008">
    <property type="entry name" value="infA"/>
    <property type="match status" value="1"/>
</dbReference>
<dbReference type="PANTHER" id="PTHR33370">
    <property type="entry name" value="TRANSLATION INITIATION FACTOR IF-1, CHLOROPLASTIC"/>
    <property type="match status" value="1"/>
</dbReference>
<dbReference type="PANTHER" id="PTHR33370:SF1">
    <property type="entry name" value="TRANSLATION INITIATION FACTOR IF-1, CHLOROPLASTIC"/>
    <property type="match status" value="1"/>
</dbReference>
<dbReference type="Pfam" id="PF01176">
    <property type="entry name" value="eIF-1a"/>
    <property type="match status" value="1"/>
</dbReference>
<dbReference type="SMART" id="SM00316">
    <property type="entry name" value="S1"/>
    <property type="match status" value="1"/>
</dbReference>
<dbReference type="SUPFAM" id="SSF50249">
    <property type="entry name" value="Nucleic acid-binding proteins"/>
    <property type="match status" value="1"/>
</dbReference>
<dbReference type="PROSITE" id="PS50832">
    <property type="entry name" value="S1_IF1_TYPE"/>
    <property type="match status" value="1"/>
</dbReference>
<comment type="function">
    <text evidence="1">One of the essential components for the initiation of protein synthesis. Stabilizes the binding of IF-2 and IF-3 on the 30S subunit to which N-formylmethionyl-tRNA(fMet) subsequently binds. Helps modulate mRNA selection, yielding the 30S pre-initiation complex (PIC). Upon addition of the 50S ribosomal subunit IF-1, IF-2 and IF-3 are released leaving the mature 70S translation initiation complex.</text>
</comment>
<comment type="subunit">
    <text evidence="1">Component of the 30S ribosomal translation pre-initiation complex which assembles on the 30S ribosome in the order IF-2 and IF-3, IF-1 and N-formylmethionyl-tRNA(fMet); mRNA recruitment can occur at any time during PIC assembly.</text>
</comment>
<comment type="subcellular location">
    <subcellularLocation>
        <location evidence="1">Cytoplasm</location>
    </subcellularLocation>
</comment>
<comment type="similarity">
    <text evidence="1">Belongs to the IF-1 family.</text>
</comment>
<keyword id="KW-0963">Cytoplasm</keyword>
<keyword id="KW-0396">Initiation factor</keyword>
<keyword id="KW-0648">Protein biosynthesis</keyword>
<keyword id="KW-0694">RNA-binding</keyword>
<keyword id="KW-0699">rRNA-binding</keyword>
<reference key="1">
    <citation type="journal article" date="2007" name="Environ. Microbiol.">
        <title>Whole-genome analysis of the ammonia-oxidizing bacterium, Nitrosomonas eutropha C91: implications for niche adaptation.</title>
        <authorList>
            <person name="Stein L.Y."/>
            <person name="Arp D.J."/>
            <person name="Berube P.M."/>
            <person name="Chain P.S."/>
            <person name="Hauser L."/>
            <person name="Jetten M.S."/>
            <person name="Klotz M.G."/>
            <person name="Larimer F.W."/>
            <person name="Norton J.M."/>
            <person name="Op den Camp H.J.M."/>
            <person name="Shin M."/>
            <person name="Wei X."/>
        </authorList>
    </citation>
    <scope>NUCLEOTIDE SEQUENCE [LARGE SCALE GENOMIC DNA]</scope>
    <source>
        <strain>DSM 101675 / C91 / Nm57</strain>
    </source>
</reference>
<gene>
    <name evidence="1" type="primary">infA</name>
    <name type="ordered locus">Neut_0579</name>
</gene>
<feature type="chain" id="PRO_0000338872" description="Translation initiation factor IF-1">
    <location>
        <begin position="1"/>
        <end position="72"/>
    </location>
</feature>
<feature type="domain" description="S1-like" evidence="1">
    <location>
        <begin position="1"/>
        <end position="72"/>
    </location>
</feature>
<protein>
    <recommendedName>
        <fullName evidence="1">Translation initiation factor IF-1</fullName>
    </recommendedName>
</protein>
<accession>Q0AIH5</accession>
<proteinExistence type="inferred from homology"/>
<sequence length="72" mass="8272">MAKEETIQMQGEVIETLPNATFRIKLENGHIVLGHISGKMRMNYIRILPGDKVTVDLTPYDLTRARITFRTK</sequence>
<evidence type="ECO:0000255" key="1">
    <source>
        <dbReference type="HAMAP-Rule" id="MF_00075"/>
    </source>
</evidence>